<dbReference type="EMBL" id="CP001601">
    <property type="protein sequence ID" value="ACP32790.1"/>
    <property type="molecule type" value="Genomic_DNA"/>
</dbReference>
<dbReference type="RefSeq" id="WP_010186771.1">
    <property type="nucleotide sequence ID" value="NC_012590.1"/>
</dbReference>
<dbReference type="SMR" id="C3PG36"/>
<dbReference type="STRING" id="548476.cauri_1197"/>
<dbReference type="GeneID" id="31923820"/>
<dbReference type="KEGG" id="car:cauri_1197"/>
<dbReference type="eggNOG" id="COG1660">
    <property type="taxonomic scope" value="Bacteria"/>
</dbReference>
<dbReference type="HOGENOM" id="CLU_059558_0_0_11"/>
<dbReference type="OrthoDB" id="9784461at2"/>
<dbReference type="Proteomes" id="UP000002077">
    <property type="component" value="Chromosome"/>
</dbReference>
<dbReference type="GO" id="GO:0005524">
    <property type="term" value="F:ATP binding"/>
    <property type="evidence" value="ECO:0007669"/>
    <property type="project" value="UniProtKB-UniRule"/>
</dbReference>
<dbReference type="GO" id="GO:0005525">
    <property type="term" value="F:GTP binding"/>
    <property type="evidence" value="ECO:0007669"/>
    <property type="project" value="UniProtKB-UniRule"/>
</dbReference>
<dbReference type="HAMAP" id="MF_00636">
    <property type="entry name" value="RapZ_like"/>
    <property type="match status" value="1"/>
</dbReference>
<dbReference type="InterPro" id="IPR027417">
    <property type="entry name" value="P-loop_NTPase"/>
</dbReference>
<dbReference type="InterPro" id="IPR005337">
    <property type="entry name" value="RapZ-like"/>
</dbReference>
<dbReference type="InterPro" id="IPR053930">
    <property type="entry name" value="RapZ-like_N"/>
</dbReference>
<dbReference type="InterPro" id="IPR053931">
    <property type="entry name" value="RapZ_C"/>
</dbReference>
<dbReference type="NCBIfam" id="NF003828">
    <property type="entry name" value="PRK05416.1"/>
    <property type="match status" value="1"/>
</dbReference>
<dbReference type="PANTHER" id="PTHR30448">
    <property type="entry name" value="RNASE ADAPTER PROTEIN RAPZ"/>
    <property type="match status" value="1"/>
</dbReference>
<dbReference type="PANTHER" id="PTHR30448:SF0">
    <property type="entry name" value="RNASE ADAPTER PROTEIN RAPZ"/>
    <property type="match status" value="1"/>
</dbReference>
<dbReference type="Pfam" id="PF22740">
    <property type="entry name" value="PapZ_C"/>
    <property type="match status" value="1"/>
</dbReference>
<dbReference type="Pfam" id="PF03668">
    <property type="entry name" value="RapZ-like_N"/>
    <property type="match status" value="1"/>
</dbReference>
<dbReference type="PIRSF" id="PIRSF005052">
    <property type="entry name" value="P-loopkin"/>
    <property type="match status" value="1"/>
</dbReference>
<dbReference type="SUPFAM" id="SSF52540">
    <property type="entry name" value="P-loop containing nucleoside triphosphate hydrolases"/>
    <property type="match status" value="1"/>
</dbReference>
<comment type="function">
    <text evidence="1">Displays ATPase and GTPase activities.</text>
</comment>
<comment type="similarity">
    <text evidence="1">Belongs to the RapZ-like family.</text>
</comment>
<sequence length="293" mass="32601">MEAMTLFDSPPILITGMSGGGLTSAAKVLEDKGYYVAHNIPPKAIVDLLKLCASPESPVSKIAAVTDVRSRLFPGSLAETLDELEQLDMKPTLLFLDARDDVLIRRFDSVRRTHPLQDGETLKAGIQRERAAVQSIRERADIIIDTTNLSVHDLRRAIEASFGEMGHELQHVTLESFGFKHGSPRDADLVVDVRFLPNPYWVPELRGYRGTDEPVADYVLSQDAAEPFIDHFITMFDSMLAGYRHEGKNFITVGIGCTGGHHRSVAVTEEIARRLRERGDLDVSTLHRDIARD</sequence>
<keyword id="KW-0067">ATP-binding</keyword>
<keyword id="KW-0342">GTP-binding</keyword>
<keyword id="KW-0547">Nucleotide-binding</keyword>
<keyword id="KW-1185">Reference proteome</keyword>
<reference key="1">
    <citation type="journal article" date="2010" name="BMC Genomics">
        <title>Complete genome sequence and lifestyle of black-pigmented Corynebacterium aurimucosum ATCC 700975 (formerly C. nigricans CN-1) isolated from a vaginal swab of a woman with spontaneous abortion.</title>
        <authorList>
            <person name="Trost E."/>
            <person name="Gotker S."/>
            <person name="Schneider J."/>
            <person name="Schneiker-Bekel S."/>
            <person name="Szczepanowski R."/>
            <person name="Tilker A."/>
            <person name="Viehoever P."/>
            <person name="Arnold W."/>
            <person name="Bekel T."/>
            <person name="Blom J."/>
            <person name="Gartemann K.H."/>
            <person name="Linke B."/>
            <person name="Goesmann A."/>
            <person name="Puhler A."/>
            <person name="Shukla S.K."/>
            <person name="Tauch A."/>
        </authorList>
    </citation>
    <scope>NUCLEOTIDE SEQUENCE [LARGE SCALE GENOMIC DNA]</scope>
    <source>
        <strain>ATCC 700975 / DSM 44827 / CIP 107346 / CN-1</strain>
    </source>
</reference>
<proteinExistence type="inferred from homology"/>
<protein>
    <recommendedName>
        <fullName evidence="1">Nucleotide-binding protein cauri_1197</fullName>
    </recommendedName>
</protein>
<organism>
    <name type="scientific">Corynebacterium aurimucosum (strain ATCC 700975 / DSM 44827 / CIP 107346 / CN-1)</name>
    <name type="common">Corynebacterium nigricans</name>
    <dbReference type="NCBI Taxonomy" id="548476"/>
    <lineage>
        <taxon>Bacteria</taxon>
        <taxon>Bacillati</taxon>
        <taxon>Actinomycetota</taxon>
        <taxon>Actinomycetes</taxon>
        <taxon>Mycobacteriales</taxon>
        <taxon>Corynebacteriaceae</taxon>
        <taxon>Corynebacterium</taxon>
    </lineage>
</organism>
<name>Y1197_CORA7</name>
<gene>
    <name type="ordered locus">cauri_1197</name>
</gene>
<evidence type="ECO:0000255" key="1">
    <source>
        <dbReference type="HAMAP-Rule" id="MF_00636"/>
    </source>
</evidence>
<feature type="chain" id="PRO_0000383230" description="Nucleotide-binding protein cauri_1197">
    <location>
        <begin position="1"/>
        <end position="293"/>
    </location>
</feature>
<feature type="binding site" evidence="1">
    <location>
        <begin position="16"/>
        <end position="23"/>
    </location>
    <ligand>
        <name>ATP</name>
        <dbReference type="ChEBI" id="CHEBI:30616"/>
    </ligand>
</feature>
<feature type="binding site" evidence="1">
    <location>
        <begin position="67"/>
        <end position="70"/>
    </location>
    <ligand>
        <name>GTP</name>
        <dbReference type="ChEBI" id="CHEBI:37565"/>
    </ligand>
</feature>
<accession>C3PG36</accession>